<dbReference type="EMBL" id="X75013">
    <property type="protein sequence ID" value="CAA52922.1"/>
    <property type="molecule type" value="mRNA"/>
</dbReference>
<dbReference type="EMBL" id="U46684">
    <property type="protein sequence ID" value="AAB41146.1"/>
    <property type="molecule type" value="mRNA"/>
</dbReference>
<dbReference type="EMBL" id="AY037807">
    <property type="protein sequence ID" value="AAK59986.1"/>
    <property type="molecule type" value="mRNA"/>
</dbReference>
<dbReference type="EMBL" id="AK220173">
    <property type="protein sequence ID" value="BAD90358.1"/>
    <property type="status" value="ALT_INIT"/>
    <property type="molecule type" value="mRNA"/>
</dbReference>
<dbReference type="EMBL" id="AF004225">
    <property type="protein sequence ID" value="AAD12485.1"/>
    <property type="molecule type" value="mRNA"/>
</dbReference>
<dbReference type="EMBL" id="U46683">
    <property type="protein sequence ID" value="AAC52775.1"/>
    <property type="molecule type" value="mRNA"/>
</dbReference>
<dbReference type="CCDS" id="CCDS71684.1">
    <molecule id="P53564-3"/>
</dbReference>
<dbReference type="PIR" id="I48314">
    <property type="entry name" value="I48314"/>
</dbReference>
<dbReference type="RefSeq" id="NP_001278162.1">
    <property type="nucleotide sequence ID" value="NM_001291233.1"/>
</dbReference>
<dbReference type="RefSeq" id="NP_001278163.1">
    <property type="nucleotide sequence ID" value="NM_001291234.1"/>
</dbReference>
<dbReference type="RefSeq" id="NP_034116.3">
    <property type="nucleotide sequence ID" value="NM_009986.4"/>
</dbReference>
<dbReference type="SMR" id="P53564"/>
<dbReference type="BioGRID" id="198981">
    <property type="interactions" value="7"/>
</dbReference>
<dbReference type="FunCoup" id="P53564">
    <property type="interactions" value="1820"/>
</dbReference>
<dbReference type="IntAct" id="P53564">
    <property type="interactions" value="5"/>
</dbReference>
<dbReference type="MINT" id="P53564"/>
<dbReference type="STRING" id="10090.ENSMUSP00000135223"/>
<dbReference type="GlyGen" id="P53564">
    <property type="glycosylation" value="2 sites, 1 N-linked glycan (1 site), 1 O-linked glycan (1 site)"/>
</dbReference>
<dbReference type="iPTMnet" id="P53564"/>
<dbReference type="PhosphoSitePlus" id="P53564"/>
<dbReference type="jPOST" id="P53564"/>
<dbReference type="PaxDb" id="10090-ENSMUSP00000004097"/>
<dbReference type="PeptideAtlas" id="P53564"/>
<dbReference type="ProteomicsDB" id="284063">
    <molecule id="P53564-1"/>
</dbReference>
<dbReference type="ProteomicsDB" id="284064">
    <molecule id="P53564-2"/>
</dbReference>
<dbReference type="ProteomicsDB" id="284065">
    <molecule id="P53564-3"/>
</dbReference>
<dbReference type="ProteomicsDB" id="284066">
    <molecule id="P53564-4"/>
</dbReference>
<dbReference type="ProteomicsDB" id="284067">
    <molecule id="P53564-5"/>
</dbReference>
<dbReference type="Pumba" id="P53564"/>
<dbReference type="DNASU" id="13047"/>
<dbReference type="GeneID" id="13047"/>
<dbReference type="KEGG" id="mmu:13047"/>
<dbReference type="AGR" id="MGI:88568"/>
<dbReference type="CTD" id="1523"/>
<dbReference type="MGI" id="MGI:88568">
    <property type="gene designation" value="Cux1"/>
</dbReference>
<dbReference type="InParanoid" id="P53564"/>
<dbReference type="PhylomeDB" id="P53564"/>
<dbReference type="BioGRID-ORCS" id="13047">
    <property type="hits" value="6 hits in 78 CRISPR screens"/>
</dbReference>
<dbReference type="ChiTaRS" id="Cux1">
    <property type="organism name" value="mouse"/>
</dbReference>
<dbReference type="Proteomes" id="UP000000589">
    <property type="component" value="Unplaced"/>
</dbReference>
<dbReference type="RNAct" id="P53564">
    <property type="molecule type" value="protein"/>
</dbReference>
<dbReference type="GO" id="GO:0005737">
    <property type="term" value="C:cytoplasm"/>
    <property type="evidence" value="ECO:0000314"/>
    <property type="project" value="MGI"/>
</dbReference>
<dbReference type="GO" id="GO:0043005">
    <property type="term" value="C:neuron projection"/>
    <property type="evidence" value="ECO:0000314"/>
    <property type="project" value="MGI"/>
</dbReference>
<dbReference type="GO" id="GO:0005634">
    <property type="term" value="C:nucleus"/>
    <property type="evidence" value="ECO:0000314"/>
    <property type="project" value="MGI"/>
</dbReference>
<dbReference type="GO" id="GO:0003682">
    <property type="term" value="F:chromatin binding"/>
    <property type="evidence" value="ECO:0000314"/>
    <property type="project" value="MGI"/>
</dbReference>
<dbReference type="GO" id="GO:0003677">
    <property type="term" value="F:DNA binding"/>
    <property type="evidence" value="ECO:0000314"/>
    <property type="project" value="MGI"/>
</dbReference>
<dbReference type="GO" id="GO:0000981">
    <property type="term" value="F:DNA-binding transcription factor activity, RNA polymerase II-specific"/>
    <property type="evidence" value="ECO:0007669"/>
    <property type="project" value="InterPro"/>
</dbReference>
<dbReference type="GO" id="GO:0000978">
    <property type="term" value="F:RNA polymerase II cis-regulatory region sequence-specific DNA binding"/>
    <property type="evidence" value="ECO:0000314"/>
    <property type="project" value="MGI"/>
</dbReference>
<dbReference type="GO" id="GO:0000977">
    <property type="term" value="F:RNA polymerase II transcription regulatory region sequence-specific DNA binding"/>
    <property type="evidence" value="ECO:0000315"/>
    <property type="project" value="UniProtKB"/>
</dbReference>
<dbReference type="GO" id="GO:0043565">
    <property type="term" value="F:sequence-specific DNA binding"/>
    <property type="evidence" value="ECO:0000314"/>
    <property type="project" value="MGI"/>
</dbReference>
<dbReference type="GO" id="GO:0042491">
    <property type="term" value="P:inner ear auditory receptor cell differentiation"/>
    <property type="evidence" value="ECO:0000315"/>
    <property type="project" value="MGI"/>
</dbReference>
<dbReference type="GO" id="GO:0001822">
    <property type="term" value="P:kidney development"/>
    <property type="evidence" value="ECO:0000316"/>
    <property type="project" value="MGI"/>
</dbReference>
<dbReference type="GO" id="GO:0030324">
    <property type="term" value="P:lung development"/>
    <property type="evidence" value="ECO:0000315"/>
    <property type="project" value="MGI"/>
</dbReference>
<dbReference type="GO" id="GO:0000122">
    <property type="term" value="P:negative regulation of transcription by RNA polymerase II"/>
    <property type="evidence" value="ECO:0000314"/>
    <property type="project" value="MGI"/>
</dbReference>
<dbReference type="GO" id="GO:0050775">
    <property type="term" value="P:positive regulation of dendrite morphogenesis"/>
    <property type="evidence" value="ECO:0000315"/>
    <property type="project" value="UniProtKB"/>
</dbReference>
<dbReference type="CDD" id="cd00086">
    <property type="entry name" value="homeodomain"/>
    <property type="match status" value="1"/>
</dbReference>
<dbReference type="FunFam" id="1.10.260.40:FF:000004">
    <property type="entry name" value="Cut-like homeobox 1a"/>
    <property type="match status" value="2"/>
</dbReference>
<dbReference type="FunFam" id="1.10.260.40:FF:000010">
    <property type="entry name" value="Cut-like homeobox 1a"/>
    <property type="match status" value="1"/>
</dbReference>
<dbReference type="FunFam" id="1.10.10.60:FF:000116">
    <property type="entry name" value="Cut-like homeobox 2b"/>
    <property type="match status" value="1"/>
</dbReference>
<dbReference type="Gene3D" id="1.10.10.60">
    <property type="entry name" value="Homeodomain-like"/>
    <property type="match status" value="1"/>
</dbReference>
<dbReference type="Gene3D" id="1.10.260.40">
    <property type="entry name" value="lambda repressor-like DNA-binding domains"/>
    <property type="match status" value="3"/>
</dbReference>
<dbReference type="InterPro" id="IPR003350">
    <property type="entry name" value="CUT_dom"/>
</dbReference>
<dbReference type="InterPro" id="IPR001356">
    <property type="entry name" value="HD"/>
</dbReference>
<dbReference type="InterPro" id="IPR017970">
    <property type="entry name" value="Homeobox_CS"/>
</dbReference>
<dbReference type="InterPro" id="IPR009057">
    <property type="entry name" value="Homeodomain-like_sf"/>
</dbReference>
<dbReference type="InterPro" id="IPR010982">
    <property type="entry name" value="Lambda_DNA-bd_dom_sf"/>
</dbReference>
<dbReference type="PANTHER" id="PTHR14043">
    <property type="entry name" value="CCAAT DISPLACEMENT PROTEIN-RELATED"/>
    <property type="match status" value="1"/>
</dbReference>
<dbReference type="PANTHER" id="PTHR14043:SF4">
    <property type="entry name" value="HOMEOBOX PROTEIN CUT-LIKE 1"/>
    <property type="match status" value="1"/>
</dbReference>
<dbReference type="Pfam" id="PF02376">
    <property type="entry name" value="CUT"/>
    <property type="match status" value="3"/>
</dbReference>
<dbReference type="Pfam" id="PF25398">
    <property type="entry name" value="CUX1_N"/>
    <property type="match status" value="1"/>
</dbReference>
<dbReference type="Pfam" id="PF00046">
    <property type="entry name" value="Homeodomain"/>
    <property type="match status" value="1"/>
</dbReference>
<dbReference type="SMART" id="SM01109">
    <property type="entry name" value="CUT"/>
    <property type="match status" value="3"/>
</dbReference>
<dbReference type="SMART" id="SM00389">
    <property type="entry name" value="HOX"/>
    <property type="match status" value="1"/>
</dbReference>
<dbReference type="SUPFAM" id="SSF46689">
    <property type="entry name" value="Homeodomain-like"/>
    <property type="match status" value="1"/>
</dbReference>
<dbReference type="SUPFAM" id="SSF47413">
    <property type="entry name" value="lambda repressor-like DNA-binding domains"/>
    <property type="match status" value="3"/>
</dbReference>
<dbReference type="PROSITE" id="PS51042">
    <property type="entry name" value="CUT"/>
    <property type="match status" value="3"/>
</dbReference>
<dbReference type="PROSITE" id="PS00027">
    <property type="entry name" value="HOMEOBOX_1"/>
    <property type="match status" value="1"/>
</dbReference>
<dbReference type="PROSITE" id="PS50071">
    <property type="entry name" value="HOMEOBOX_2"/>
    <property type="match status" value="1"/>
</dbReference>
<accession>P53564</accession>
<accession>O08994</accession>
<accession>P70301</accession>
<accession>Q571L6</accession>
<accession>Q91ZD2</accession>
<organism>
    <name type="scientific">Mus musculus</name>
    <name type="common">Mouse</name>
    <dbReference type="NCBI Taxonomy" id="10090"/>
    <lineage>
        <taxon>Eukaryota</taxon>
        <taxon>Metazoa</taxon>
        <taxon>Chordata</taxon>
        <taxon>Craniata</taxon>
        <taxon>Vertebrata</taxon>
        <taxon>Euteleostomi</taxon>
        <taxon>Mammalia</taxon>
        <taxon>Eutheria</taxon>
        <taxon>Euarchontoglires</taxon>
        <taxon>Glires</taxon>
        <taxon>Rodentia</taxon>
        <taxon>Myomorpha</taxon>
        <taxon>Muroidea</taxon>
        <taxon>Muridae</taxon>
        <taxon>Murinae</taxon>
        <taxon>Mus</taxon>
        <taxon>Mus</taxon>
    </lineage>
</organism>
<evidence type="ECO:0000250" key="1">
    <source>
        <dbReference type="UniProtKB" id="P39880"/>
    </source>
</evidence>
<evidence type="ECO:0000250" key="2">
    <source>
        <dbReference type="UniProtKB" id="P53565"/>
    </source>
</evidence>
<evidence type="ECO:0000255" key="3"/>
<evidence type="ECO:0000255" key="4">
    <source>
        <dbReference type="PROSITE-ProRule" id="PRU00108"/>
    </source>
</evidence>
<evidence type="ECO:0000255" key="5">
    <source>
        <dbReference type="PROSITE-ProRule" id="PRU00374"/>
    </source>
</evidence>
<evidence type="ECO:0000256" key="6">
    <source>
        <dbReference type="SAM" id="MobiDB-lite"/>
    </source>
</evidence>
<evidence type="ECO:0000269" key="7">
    <source>
    </source>
</evidence>
<evidence type="ECO:0000269" key="8">
    <source>
    </source>
</evidence>
<evidence type="ECO:0000269" key="9">
    <source>
    </source>
</evidence>
<evidence type="ECO:0000269" key="10">
    <source>
    </source>
</evidence>
<evidence type="ECO:0000269" key="11">
    <source>
    </source>
</evidence>
<evidence type="ECO:0000269" key="12">
    <source>
    </source>
</evidence>
<evidence type="ECO:0000269" key="13">
    <source>
    </source>
</evidence>
<evidence type="ECO:0000303" key="14">
    <source>
    </source>
</evidence>
<evidence type="ECO:0000303" key="15">
    <source>
    </source>
</evidence>
<evidence type="ECO:0000303" key="16">
    <source>
    </source>
</evidence>
<evidence type="ECO:0000303" key="17">
    <source>
    </source>
</evidence>
<evidence type="ECO:0000303" key="18">
    <source ref="4"/>
</evidence>
<evidence type="ECO:0000305" key="19"/>
<evidence type="ECO:0000305" key="20">
    <source>
    </source>
</evidence>
<evidence type="ECO:0000312" key="21">
    <source>
        <dbReference type="MGI" id="MGI:88568"/>
    </source>
</evidence>
<evidence type="ECO:0007744" key="22">
    <source>
    </source>
</evidence>
<proteinExistence type="evidence at protein level"/>
<feature type="chain" id="PRO_0000202394" description="Homeobox protein cut-like 1">
    <location>
        <begin position="1"/>
        <end position="1515"/>
    </location>
</feature>
<feature type="chain" id="PRO_0000450798" description="CDP/Cux p110" evidence="1">
    <location>
        <begin position="754"/>
        <end position="1515"/>
    </location>
</feature>
<feature type="DNA-binding region" description="CUT 1" evidence="5">
    <location>
        <begin position="540"/>
        <end position="627"/>
    </location>
</feature>
<feature type="DNA-binding region" description="CUT 2" evidence="5">
    <location>
        <begin position="929"/>
        <end position="1016"/>
    </location>
</feature>
<feature type="DNA-binding region" description="CUT 3" evidence="5">
    <location>
        <begin position="1112"/>
        <end position="1199"/>
    </location>
</feature>
<feature type="DNA-binding region" description="Homeobox" evidence="4">
    <location>
        <begin position="1239"/>
        <end position="1298"/>
    </location>
</feature>
<feature type="region of interest" description="Disordered" evidence="6">
    <location>
        <begin position="393"/>
        <end position="453"/>
    </location>
</feature>
<feature type="region of interest" description="Disordered" evidence="6">
    <location>
        <begin position="509"/>
        <end position="546"/>
    </location>
</feature>
<feature type="region of interest" description="Disordered" evidence="6">
    <location>
        <begin position="644"/>
        <end position="666"/>
    </location>
</feature>
<feature type="region of interest" description="Disordered" evidence="6">
    <location>
        <begin position="680"/>
        <end position="702"/>
    </location>
</feature>
<feature type="region of interest" description="Disordered" evidence="6">
    <location>
        <begin position="769"/>
        <end position="871"/>
    </location>
</feature>
<feature type="region of interest" description="Disordered" evidence="6">
    <location>
        <begin position="884"/>
        <end position="923"/>
    </location>
</feature>
<feature type="region of interest" description="Disordered" evidence="6">
    <location>
        <begin position="1032"/>
        <end position="1105"/>
    </location>
</feature>
<feature type="region of interest" description="Disordered" evidence="6">
    <location>
        <begin position="1207"/>
        <end position="1242"/>
    </location>
</feature>
<feature type="region of interest" description="Disordered" evidence="6">
    <location>
        <begin position="1307"/>
        <end position="1488"/>
    </location>
</feature>
<feature type="coiled-coil region" evidence="3">
    <location>
        <begin position="56"/>
        <end position="361"/>
    </location>
</feature>
<feature type="compositionally biased region" description="Polar residues" evidence="6">
    <location>
        <begin position="393"/>
        <end position="405"/>
    </location>
</feature>
<feature type="compositionally biased region" description="Pro residues" evidence="6">
    <location>
        <begin position="422"/>
        <end position="432"/>
    </location>
</feature>
<feature type="compositionally biased region" description="Polar residues" evidence="6">
    <location>
        <begin position="436"/>
        <end position="447"/>
    </location>
</feature>
<feature type="compositionally biased region" description="Low complexity" evidence="6">
    <location>
        <begin position="514"/>
        <end position="544"/>
    </location>
</feature>
<feature type="compositionally biased region" description="Basic and acidic residues" evidence="6">
    <location>
        <begin position="828"/>
        <end position="852"/>
    </location>
</feature>
<feature type="compositionally biased region" description="Polar residues" evidence="6">
    <location>
        <begin position="853"/>
        <end position="868"/>
    </location>
</feature>
<feature type="compositionally biased region" description="Polar residues" evidence="6">
    <location>
        <begin position="884"/>
        <end position="906"/>
    </location>
</feature>
<feature type="compositionally biased region" description="Polar residues" evidence="6">
    <location>
        <begin position="1032"/>
        <end position="1044"/>
    </location>
</feature>
<feature type="compositionally biased region" description="Low complexity" evidence="6">
    <location>
        <begin position="1045"/>
        <end position="1061"/>
    </location>
</feature>
<feature type="compositionally biased region" description="Low complexity" evidence="6">
    <location>
        <begin position="1313"/>
        <end position="1328"/>
    </location>
</feature>
<feature type="compositionally biased region" description="Acidic residues" evidence="6">
    <location>
        <begin position="1331"/>
        <end position="1343"/>
    </location>
</feature>
<feature type="compositionally biased region" description="Basic and acidic residues" evidence="6">
    <location>
        <begin position="1365"/>
        <end position="1378"/>
    </location>
</feature>
<feature type="compositionally biased region" description="Low complexity" evidence="6">
    <location>
        <begin position="1406"/>
        <end position="1468"/>
    </location>
</feature>
<feature type="site" description="Cleavage; by CTSL" evidence="1">
    <location>
        <begin position="641"/>
        <end position="642"/>
    </location>
</feature>
<feature type="site" description="Cleavage; by CTSL" evidence="1">
    <location>
        <begin position="745"/>
        <end position="753"/>
    </location>
</feature>
<feature type="modified residue" description="Phosphoserine" evidence="22">
    <location>
        <position position="427"/>
    </location>
</feature>
<feature type="modified residue" description="Phosphoserine" evidence="1">
    <location>
        <position position="761"/>
    </location>
</feature>
<feature type="modified residue" description="Phosphoserine" evidence="2">
    <location>
        <position position="904"/>
    </location>
</feature>
<feature type="modified residue" description="Phosphoserine" evidence="1">
    <location>
        <position position="1054"/>
    </location>
</feature>
<feature type="modified residue" description="Phosphoserine" evidence="2">
    <location>
        <position position="1064"/>
    </location>
</feature>
<feature type="modified residue" description="Phosphoserine" evidence="1">
    <location>
        <position position="1265"/>
    </location>
</feature>
<feature type="modified residue" description="Phosphoserine" evidence="22">
    <location>
        <position position="1332"/>
    </location>
</feature>
<feature type="modified residue" description="Phosphoserine" evidence="1">
    <location>
        <position position="1468"/>
    </location>
</feature>
<feature type="modified residue" description="Phosphoserine" evidence="1">
    <location>
        <position position="1496"/>
    </location>
</feature>
<feature type="modified residue" description="Phosphoserine" evidence="22">
    <location>
        <position position="1506"/>
    </location>
</feature>
<feature type="cross-link" description="Glycyl lysine isopeptide (Lys-Gly) (interchain with G-Cter in SUMO2)" evidence="1">
    <location>
        <position position="783"/>
    </location>
</feature>
<feature type="cross-link" description="Glycyl lysine isopeptide (Lys-Gly) (interchain with G-Cter in SUMO2)" evidence="1">
    <location>
        <position position="809"/>
    </location>
</feature>
<feature type="cross-link" description="Glycyl lysine isopeptide (Lys-Gly) (interchain with G-Cter in SUMO2)" evidence="1">
    <location>
        <position position="840"/>
    </location>
</feature>
<feature type="cross-link" description="Glycyl lysine isopeptide (Lys-Gly) (interchain with G-Cter in SUMO2)" evidence="1">
    <location>
        <position position="1279"/>
    </location>
</feature>
<feature type="splice variant" id="VSP_017360" description="In isoform 6." evidence="16">
    <location>
        <begin position="1"/>
        <end position="1055"/>
    </location>
</feature>
<feature type="splice variant" id="VSP_015748" description="In isoform 4." evidence="15">
    <location>
        <begin position="1"/>
        <end position="183"/>
    </location>
</feature>
<feature type="splice variant" id="VSP_015749" description="In isoform 3." evidence="18">
    <original>MLCVAGAKLK</original>
    <variation>MAANVGSMFQYWKRFDLQQLQ</variation>
    <location>
        <begin position="1"/>
        <end position="10"/>
    </location>
</feature>
<feature type="splice variant" id="VSP_002311" description="In isoform 2." evidence="17">
    <location>
        <begin position="406"/>
        <end position="507"/>
    </location>
</feature>
<feature type="splice variant" id="VSP_015750" description="In isoform 3." evidence="18">
    <location>
        <begin position="630"/>
        <end position="651"/>
    </location>
</feature>
<feature type="sequence conflict" description="In Ref. 3; AAK59986." evidence="19" ref="3">
    <original>V</original>
    <variation>VEQ</variation>
    <location>
        <position position="276"/>
    </location>
</feature>
<feature type="sequence conflict" description="In Ref. 1; CAA52922 and 5; AAD12485." evidence="19" ref="1 5">
    <original>R</original>
    <variation>G</variation>
    <location>
        <position position="649"/>
    </location>
</feature>
<feature type="sequence conflict" description="In Ref. 1; CAA52922." evidence="19" ref="1">
    <original>G</original>
    <variation>A</variation>
    <location>
        <position position="1480"/>
    </location>
</feature>
<feature type="sequence conflict" description="In Ref. 5; AAD12485." evidence="19" ref="5">
    <original>P</original>
    <variation>L</variation>
    <location>
        <position position="1485"/>
    </location>
</feature>
<gene>
    <name evidence="21" type="primary">Cux1</name>
    <name type="synonym">Cutl1</name>
    <name type="synonym">Cux</name>
    <name type="synonym">Kiaa4047</name>
</gene>
<reference key="1">
    <citation type="journal article" date="1993" name="Development">
        <title>The mouse homeodomain protein Phox2 regulates Ncam promoter activity in concert with Cux/CDP and is a putative determinant of neurotransmitter phenotype.</title>
        <authorList>
            <person name="Valarche I."/>
            <person name="Tissier-Seta J.-P."/>
            <person name="Hirsch M.R."/>
            <person name="Martinez S."/>
            <person name="Goridis C."/>
            <person name="Brunet J.-F."/>
        </authorList>
    </citation>
    <scope>NUCLEOTIDE SEQUENCE [MRNA] (ISOFORM 4)</scope>
    <source>
        <strain>A/J</strain>
        <strain>BALB/cJ</strain>
        <tissue>Brain</tissue>
    </source>
</reference>
<reference key="2">
    <citation type="journal article" date="1996" name="Biol. Reprod.">
        <title>A unique variant of a homeobox gene related to Drosophila cut is expressed in mouse testis.</title>
        <authorList>
            <person name="Vanden Heuvel G.B."/>
            <person name="Quaggin S.E."/>
            <person name="Igarashi P."/>
        </authorList>
    </citation>
    <scope>NUCLEOTIDE SEQUENCE [MRNA] (ISOFORM 6)</scope>
    <scope>TISSUE SPECIFICITY</scope>
    <scope>DEVELOPMENTAL STAGE</scope>
    <source>
        <tissue>Testis</tissue>
    </source>
</reference>
<reference key="3">
    <citation type="journal article" date="2001" name="Genes Dev.">
        <title>The transcriptional repressor CDP (Cutl1) is essential for epithelial cell differentiation of the lung and the hair follicle.</title>
        <authorList>
            <person name="Ellis T."/>
            <person name="Gambardella L."/>
            <person name="Horcher M."/>
            <person name="Tschanz S."/>
            <person name="Capol J."/>
            <person name="Bertram P."/>
            <person name="Jochum W."/>
            <person name="Barrandon Y."/>
            <person name="Busslinger M."/>
        </authorList>
    </citation>
    <scope>NUCLEOTIDE SEQUENCE [MRNA] (ISOFORM 5)</scope>
    <scope>FUNCTION</scope>
</reference>
<reference key="4">
    <citation type="submission" date="2005-02" db="EMBL/GenBank/DDBJ databases">
        <title>Prediction of the coding sequences of mouse homologues of KIAA gene. The complete nucleotide sequences of mouse KIAA-homologous cDNAs identified by screening of terminal sequences of cDNA clones randomly sampled from size-fractionated libraries.</title>
        <authorList>
            <person name="Okazaki N."/>
            <person name="Kikuno R.F."/>
            <person name="Ohara R."/>
            <person name="Inamoto S."/>
            <person name="Nagase T."/>
            <person name="Ohara O."/>
            <person name="Koga H."/>
        </authorList>
    </citation>
    <scope>NUCLEOTIDE SEQUENCE [LARGE SCALE MRNA] (ISOFORM 3)</scope>
    <source>
        <tissue>Embryonic tail</tissue>
    </source>
</reference>
<reference key="5">
    <citation type="journal article" date="1999" name="Mol. Cell. Biol.">
        <title>Cux/CDP homeoprotein is a component of NF-muNR and represses the immunoglobulin heavy chain intronic enhancer by antagonizing the bright transcription activator.</title>
        <authorList>
            <person name="Wang Z."/>
            <person name="Goldstein A."/>
            <person name="Zong R.-T."/>
            <person name="Lin D."/>
            <person name="Neufeld E.J."/>
            <person name="Scheuermann R.H."/>
            <person name="Tucker P.W."/>
        </authorList>
    </citation>
    <scope>NUCLEOTIDE SEQUENCE [MRNA] OF 121-1515 (ISOFORM 2)</scope>
    <scope>FUNCTION</scope>
    <source>
        <strain>C57BL/6N</strain>
    </source>
</reference>
<reference key="6">
    <citation type="journal article" date="1996" name="Kidney Int.">
        <title>Expression of a cut-related homeobox gene in developing and polycystic mouse kidney.</title>
        <authorList>
            <person name="Vanden Heuvel G.B."/>
            <person name="Bodmer R."/>
            <person name="McConnell K.R."/>
            <person name="Nagami G.T."/>
            <person name="Igarashi P."/>
        </authorList>
    </citation>
    <scope>NUCLEOTIDE SEQUENCE [MRNA] OF 762-1515 (ISOFORMS 2/3/4/5)</scope>
</reference>
<reference key="7">
    <citation type="journal article" date="1999" name="Mol. Cell. Biol.">
        <title>Homeoproteins CDP and SATB1 interact: potential for tissue-specific regulation.</title>
        <authorList>
            <person name="Liu J."/>
            <person name="Barnett A."/>
            <person name="Neufeld E.J."/>
            <person name="Dudley J.P."/>
        </authorList>
    </citation>
    <scope>INTERACTION WITH SATB1</scope>
</reference>
<reference key="8">
    <citation type="journal article" date="2004" name="Nucleic Acids Res.">
        <title>SMAR1 and Cux/CDP modulate chromatin and act as negative regulators of the TCRbeta enhancer (Ebeta).</title>
        <authorList>
            <person name="Kaul-Ghanekar R."/>
            <person name="Jalota-Badhwar A."/>
            <person name="Pavithra L."/>
            <person name="Tucker P."/>
            <person name="Chattopadhyay S."/>
        </authorList>
    </citation>
    <scope>FUNCTION</scope>
    <scope>INTERACTION WITH BANP</scope>
    <scope>SUBCELLULAR LOCATION</scope>
</reference>
<reference key="9">
    <citation type="journal article" date="2004" name="Mol. Cell">
        <title>A cathepsin L isoform that is devoid of a signal peptide localizes to the nucleus in S phase and processes the CDP/Cux transcription factor.</title>
        <authorList>
            <person name="Goulet B."/>
            <person name="Baruch A."/>
            <person name="Moon N.S."/>
            <person name="Poirier M."/>
            <person name="Sansregret L.L."/>
            <person name="Erickson A."/>
            <person name="Bogyo M."/>
            <person name="Nepveu A."/>
        </authorList>
    </citation>
    <scope>FUNCTION</scope>
    <scope>SUBCELLULAR LOCATION</scope>
    <scope>PROTEOLYTIC CLEAVAGE</scope>
    <scope>DNA-BINDING</scope>
</reference>
<reference key="10">
    <citation type="journal article" date="2010" name="Cell">
        <title>A tissue-specific atlas of mouse protein phosphorylation and expression.</title>
        <authorList>
            <person name="Huttlin E.L."/>
            <person name="Jedrychowski M.P."/>
            <person name="Elias J.E."/>
            <person name="Goswami T."/>
            <person name="Rad R."/>
            <person name="Beausoleil S.A."/>
            <person name="Villen J."/>
            <person name="Haas W."/>
            <person name="Sowa M.E."/>
            <person name="Gygi S.P."/>
        </authorList>
    </citation>
    <scope>PHOSPHORYLATION [LARGE SCALE ANALYSIS] AT SER-427; SER-1332 AND SER-1506</scope>
    <scope>IDENTIFICATION BY MASS SPECTROMETRY [LARGE SCALE ANALYSIS]</scope>
    <source>
        <tissue>Brain</tissue>
        <tissue>Brown adipose tissue</tissue>
        <tissue>Heart</tissue>
        <tissue>Kidney</tissue>
        <tissue>Lung</tissue>
        <tissue>Spleen</tissue>
    </source>
</reference>
<reference key="11">
    <citation type="journal article" date="2010" name="Neuron">
        <title>Cux1 and Cux2 regulate dendritic branching, spine morphology, and synapses of the upper layer neurons of the cortex.</title>
        <authorList>
            <person name="Cubelos B."/>
            <person name="Sebastian-Serrano A."/>
            <person name="Beccari L."/>
            <person name="Calcagnotto M.E."/>
            <person name="Cisneros E."/>
            <person name="Kim S."/>
            <person name="Dopazo A."/>
            <person name="Alvarez-Dolado M."/>
            <person name="Redondo J.M."/>
            <person name="Bovolenta P."/>
            <person name="Walsh C.A."/>
            <person name="Nieto M."/>
        </authorList>
    </citation>
    <scope>FUNCTION</scope>
    <scope>DISRUPTION PHENOTYPE</scope>
</reference>
<keyword id="KW-0025">Alternative splicing</keyword>
<keyword id="KW-0175">Coiled coil</keyword>
<keyword id="KW-0217">Developmental protein</keyword>
<keyword id="KW-0238">DNA-binding</keyword>
<keyword id="KW-0371">Homeobox</keyword>
<keyword id="KW-1017">Isopeptide bond</keyword>
<keyword id="KW-0539">Nucleus</keyword>
<keyword id="KW-0597">Phosphoprotein</keyword>
<keyword id="KW-1185">Reference proteome</keyword>
<keyword id="KW-0677">Repeat</keyword>
<keyword id="KW-0678">Repressor</keyword>
<keyword id="KW-0804">Transcription</keyword>
<keyword id="KW-0805">Transcription regulation</keyword>
<keyword id="KW-0832">Ubl conjugation</keyword>
<sequence>MLCVAGAKLKRELDATATVLANRQDESEQSRKRLIEQSREFKKNTPEDLRKQVAPLLKSFQGEIDALSKRSKEAEAAFLTVYKRLIDVPDPVPALDVGQQLEIKVQRLHDIETENQKLRETLEEYNKEFAEVKNQEVTIKALKEKIREYEQTLKSQAETIALEKEQKLQNDFAEKERKLQETQMSTTSKLEEAEHKLQTLQTALEKTRTELFDLKTKYDEETTAKADEIEMIMTDLERANQRAEVAQREAETLREQLSSANHSLQLASQIQKAPDVAIEVLTRSSLEVELAAKEREIAQLVEDVQRLQASLTKLRENSASQISQLEQQLNAKNSTLKQLEEKLKGQADYEEVKKELNTLKSMEFAPSEGAGTQDSTKPLEVLLLEKNRSLQSENATLRISNSDLSGSARRKGRDQPESRRPGPLPASPPPQLPRNTGEQVSNTNGTHHFSPAGLSQDFFSSNLASPSLPLASTGKFALNSLLQRQLMQSFYSKAMQEAGSTSTIFSTGPYSTNSISSPSPLQQSPDVNGMAPSPSQSESAGSISEGEEIDTAEIARQVKEQLIKHNIGQRIFGHYVLGLSQGSVSEILARPKPWNKLTVRGKEPFHKMKQFLSDEQNILALRSIQGRQRENPGQSLNRLFQEVPKRRNRSEGNITTRIRASETGSDEAIKSILEQAKRELQVQKTAEPVQTSSTSSSGNSDDAIRSILQQARREMEAQQAALDPALKPAPLSQPDLTILTPKHLSASPMSTVSTYPPLAISLKKTPAAPETSTAALPSAPALKKEAQDVPTLDPPGSADAAQGVLRPMKSELVRGSTWKDPWWSPIQPERRNLTSSEETKADETTASGKERAGSSQPRAERSQLQGPSASAEYWKEWPSAESPYSQSSELSLTGASRSETPQNSPLPSSPIVPMAKPAKPSVPPLTPEQYEVYMYQEVDTIELTRQVKEKLAKNGICQRIFGEKVLGLSQGSVSDMLSRPKPWSKLTQKGREPFIRMQLWLNGELGQGVLPVQGQQQGPVLHSVASLQDPLQQGCVSSESTPKTSASCSPAPESPMSSSESVKSLTELVQQPCPAIETSKEGKPPEPSDPPASDSQPTTPLPLSGHSALSIQELVAMSPELDTYGITKRVKEVLTDNNLGQRLFGETILGLTQGSVSDLLARPKPWHKLSLKGREPFVRMQLWLNDPNNVEKLMDMKRMEKKAYMKRRHSSVSDSQPCEPPSVGIDYSQGASPQPQHQLKKPRVVLAPEEKEALKRAYQQKPYPSPKTIEELATQLNLKTSTVINWFHNYRSRIRRELFIEEIQAGSQGQAGASDSPSARSSRAAPSSEGDSCDGVEATDAEEPGGNIVATKSQGGLAEVAAAPADREEATQPAEKAKAQPLCSGTPGQDDGEDASRPRPLPEGLADAPAPVPSLAAPAAGEDAATSATAPATATEAPGAARAGPAERSSALPSTSAPANAPARRPSSLQSLFGLPEAAGARDNPVRKKKAANLNSIIHRLEKAASREEPIEWEF</sequence>
<comment type="function">
    <text evidence="8 10 11 13 20">Transcription factor involved in the control of neuronal differentiation in the brain. Regulates dendrite development and branching, and dendritic spine formation in cortical layers II-III (PubMed:20510857). Also involved in the control of synaptogenesis (Probable). In addition, it has probably a broad role in mammalian development as a repressor of developmentally regulated gene expression. May act by preventing binding of positively-activing CCAAT factors to promoters. Component of nf-munr repressor; binds to the matrix attachment regions (MARs) (5' and 3') of the immunoglobulin heavy chain enhancer. Represses T-cell receptor (TCR) beta enhancer function by binding to MARbeta, an ATC-rich DNA sequence located upstream of the TCR beta enhancer. Binds to the TH enhancer; may require the basic helix-loop-helix protein TCF4 as a coactivator.</text>
</comment>
<comment type="function">
    <molecule>CDP/Cux p110</molecule>
    <text evidence="9">Plays a role in cell cycle progression, in particular at the G1/S transition. As cells progress into S phase, a fraction of CUX1 molecules is proteolytically processed into N-terminally truncated proteins of 110 kDa. While CUX1 only transiently binds to DNA and carries the CCAAT-displacement activity, CDP/Cux p110 makes a stable interaction with DNA and stimulates expression of genes such as POLA1.</text>
</comment>
<comment type="subunit">
    <text evidence="7 10">Interacts with BANP. Interacts with SATB1 (via DNA-binding domains); the interaction inhibits the attachment of both proteins to DNA.</text>
</comment>
<comment type="interaction">
    <interactant intactId="EBI-642309">
        <id>P53564</id>
    </interactant>
    <interactant intactId="EBI-5737999">
        <id>Q8VI24</id>
        <label>Satb2</label>
    </interactant>
    <organismsDiffer>false</organismsDiffer>
    <experiments>3</experiments>
</comment>
<comment type="subcellular location">
    <subcellularLocation>
        <location evidence="4 5 10">Nucleus</location>
    </subcellularLocation>
</comment>
<comment type="alternative products">
    <event type="alternative splicing"/>
    <isoform>
        <id>P53564-1</id>
        <name>5</name>
        <sequence type="displayed"/>
    </isoform>
    <isoform>
        <id>P53564-2</id>
        <name>2</name>
        <sequence type="described" ref="VSP_002311"/>
    </isoform>
    <isoform>
        <id>P53564-3</id>
        <name>3</name>
        <sequence type="described" ref="VSP_015749 VSP_015750"/>
    </isoform>
    <isoform>
        <id>P53564-4</id>
        <name>4</name>
        <sequence type="described" ref="VSP_015748"/>
    </isoform>
    <isoform>
        <id>P53564-5</id>
        <name>6</name>
        <sequence type="described" ref="VSP_017360"/>
    </isoform>
    <isoform>
        <id>P70403-1</id>
        <name>1</name>
        <name>CASP</name>
        <sequence type="external"/>
    </isoform>
</comment>
<comment type="tissue specificity">
    <molecule>Isoform 6</molecule>
    <text evidence="12">Testis-specific where it is expressed in germ cells.</text>
</comment>
<comment type="developmental stage">
    <text evidence="12">In postpubertal testis, isoform 6 is expressed from stages IV-V of spermatogenesis in the outer layer of round spermatids. Expression continues through stages VI-VII but no expression is detected in stages IX-XI. In prepubertal testis, isoform 6 is expressed in post-meiotic germ cells at the round spermatid stage.</text>
</comment>
<comment type="PTM">
    <text evidence="2">Phosphorylated by PKA.</text>
</comment>
<comment type="PTM">
    <text evidence="9">As cells progress into S phase, a fraction of CUX1 molecules is proteolytically processed into N-terminally truncated proteins of 110 kDa by CTSL. Cell cycle-dependent processing of CUX1 serves to generate a CDP/Cux p110 with distinct DNA binding and transcriptional properties.</text>
</comment>
<comment type="disruption phenotype">
    <text evidence="11">Brains from knockout mice show neurons in layer II-III with a significant decrease in the dendritic length and the number of branches, as well as a severe reduction of dendritic spines density.</text>
</comment>
<comment type="miscellaneous">
    <text>Asn-1285 may participate in regulating DNA-binding activity by promoting homo- and heterodimerization.</text>
</comment>
<comment type="similarity">
    <text evidence="19">Belongs to the CUT homeobox family.</text>
</comment>
<comment type="sequence caution" evidence="19">
    <conflict type="erroneous initiation">
        <sequence resource="EMBL-CDS" id="BAD90358"/>
    </conflict>
    <text>Extended N-terminus.</text>
</comment>
<name>CUX1_MOUSE</name>
<protein>
    <recommendedName>
        <fullName evidence="19">Homeobox protein cut-like 1</fullName>
    </recommendedName>
    <alternativeName>
        <fullName>CCAAT displacement protein</fullName>
        <shortName>CDP</shortName>
    </alternativeName>
    <alternativeName>
        <fullName>Homeobox protein cux-1</fullName>
    </alternativeName>
    <component>
        <recommendedName>
            <fullName evidence="14">CDP/Cux p110</fullName>
        </recommendedName>
    </component>
</protein>